<protein>
    <recommendedName>
        <fullName>Neutral protease 2 homolog SNOG_10522</fullName>
        <ecNumber>3.4.24.39</ecNumber>
    </recommendedName>
    <alternativeName>
        <fullName>Deuterolysin SNOG_10522</fullName>
    </alternativeName>
</protein>
<reference key="1">
    <citation type="journal article" date="2007" name="Plant Cell">
        <title>Dothideomycete-plant interactions illuminated by genome sequencing and EST analysis of the wheat pathogen Stagonospora nodorum.</title>
        <authorList>
            <person name="Hane J.K."/>
            <person name="Lowe R.G.T."/>
            <person name="Solomon P.S."/>
            <person name="Tan K.-C."/>
            <person name="Schoch C.L."/>
            <person name="Spatafora J.W."/>
            <person name="Crous P.W."/>
            <person name="Kodira C.D."/>
            <person name="Birren B.W."/>
            <person name="Galagan J.E."/>
            <person name="Torriani S.F.F."/>
            <person name="McDonald B.A."/>
            <person name="Oliver R.P."/>
        </authorList>
    </citation>
    <scope>NUCLEOTIDE SEQUENCE [LARGE SCALE GENOMIC DNA]</scope>
    <source>
        <strain>SN15 / ATCC MYA-4574 / FGSC 10173</strain>
    </source>
</reference>
<sequence>MKVSSQLAVAALASFATAASVDVHKRETPLSVKLAASGNSEVKVTLTNNGEKTLNLLSKGTFLDEQLPVEKVQMYAAGGSDKVAFEGMKVRLLTSGLKADDFVTLAAGETKEITVETAALHSLHEGGDFDVFAKGALPFAEGASTELAGALDYESNKLSMTIDGAQAASVAKALNKRTAIGSSCTGTKLSTVRTALSNCARLANAAASAATSGTKLTTYFKTTSSASTVAARLRAVASDCGSTSSRTTTNCNDPYSGCSSNVLAYTVPSANFITYCPIFFSALPALASTCHGQDQATTALHEETHAPGVYSPGTQDNGYGYAAATALSANQALNNADSYALYANAINLNC</sequence>
<evidence type="ECO:0000250" key="1"/>
<evidence type="ECO:0000255" key="2"/>
<evidence type="ECO:0000305" key="3"/>
<accession>Q0UCJ2</accession>
<gene>
    <name type="ORF">SNOG_10522</name>
</gene>
<organism>
    <name type="scientific">Phaeosphaeria nodorum (strain SN15 / ATCC MYA-4574 / FGSC 10173)</name>
    <name type="common">Glume blotch fungus</name>
    <name type="synonym">Parastagonospora nodorum</name>
    <dbReference type="NCBI Taxonomy" id="321614"/>
    <lineage>
        <taxon>Eukaryota</taxon>
        <taxon>Fungi</taxon>
        <taxon>Dikarya</taxon>
        <taxon>Ascomycota</taxon>
        <taxon>Pezizomycotina</taxon>
        <taxon>Dothideomycetes</taxon>
        <taxon>Pleosporomycetidae</taxon>
        <taxon>Pleosporales</taxon>
        <taxon>Pleosporineae</taxon>
        <taxon>Phaeosphaeriaceae</taxon>
        <taxon>Parastagonospora</taxon>
    </lineage>
</organism>
<dbReference type="EC" id="3.4.24.39"/>
<dbReference type="EMBL" id="CH445341">
    <property type="protein sequence ID" value="EAT81916.1"/>
    <property type="molecule type" value="Genomic_DNA"/>
</dbReference>
<dbReference type="RefSeq" id="XP_001800791.1">
    <property type="nucleotide sequence ID" value="XM_001800739.1"/>
</dbReference>
<dbReference type="SMR" id="Q0UCJ2"/>
<dbReference type="MEROPS" id="M35.001"/>
<dbReference type="EnsemblFungi" id="SNOT_10522">
    <property type="protein sequence ID" value="SNOT_10522"/>
    <property type="gene ID" value="SNOG_10522"/>
</dbReference>
<dbReference type="GeneID" id="5977698"/>
<dbReference type="KEGG" id="pno:SNOG_10522"/>
<dbReference type="VEuPathDB" id="FungiDB:JI435_105220"/>
<dbReference type="eggNOG" id="ENOG502SGF5">
    <property type="taxonomic scope" value="Eukaryota"/>
</dbReference>
<dbReference type="HOGENOM" id="CLU_039313_0_0_1"/>
<dbReference type="InParanoid" id="Q0UCJ2"/>
<dbReference type="OMA" id="ANCDLYY"/>
<dbReference type="OrthoDB" id="412874at2759"/>
<dbReference type="BRENDA" id="3.4.24.39">
    <property type="organism ID" value="7864"/>
</dbReference>
<dbReference type="Proteomes" id="UP000001055">
    <property type="component" value="Unassembled WGS sequence"/>
</dbReference>
<dbReference type="GO" id="GO:0005576">
    <property type="term" value="C:extracellular region"/>
    <property type="evidence" value="ECO:0007669"/>
    <property type="project" value="UniProtKB-SubCell"/>
</dbReference>
<dbReference type="GO" id="GO:0046872">
    <property type="term" value="F:metal ion binding"/>
    <property type="evidence" value="ECO:0007669"/>
    <property type="project" value="UniProtKB-KW"/>
</dbReference>
<dbReference type="GO" id="GO:0004222">
    <property type="term" value="F:metalloendopeptidase activity"/>
    <property type="evidence" value="ECO:0007669"/>
    <property type="project" value="InterPro"/>
</dbReference>
<dbReference type="GO" id="GO:0006508">
    <property type="term" value="P:proteolysis"/>
    <property type="evidence" value="ECO:0007669"/>
    <property type="project" value="UniProtKB-KW"/>
</dbReference>
<dbReference type="CDD" id="cd11008">
    <property type="entry name" value="M35_deuterolysin_like"/>
    <property type="match status" value="1"/>
</dbReference>
<dbReference type="Gene3D" id="2.60.40.2970">
    <property type="match status" value="1"/>
</dbReference>
<dbReference type="Gene3D" id="3.40.390.10">
    <property type="entry name" value="Collagenase (Catalytic Domain)"/>
    <property type="match status" value="1"/>
</dbReference>
<dbReference type="InterPro" id="IPR050414">
    <property type="entry name" value="Fungal_M35_metalloproteases"/>
</dbReference>
<dbReference type="InterPro" id="IPR024079">
    <property type="entry name" value="MetalloPept_cat_dom_sf"/>
</dbReference>
<dbReference type="InterPro" id="IPR001384">
    <property type="entry name" value="Peptidase_M35"/>
</dbReference>
<dbReference type="PANTHER" id="PTHR37016">
    <property type="match status" value="1"/>
</dbReference>
<dbReference type="PANTHER" id="PTHR37016:SF3">
    <property type="entry name" value="NEUTRAL PROTEASE 2-RELATED"/>
    <property type="match status" value="1"/>
</dbReference>
<dbReference type="Pfam" id="PF02102">
    <property type="entry name" value="Peptidase_M35"/>
    <property type="match status" value="1"/>
</dbReference>
<dbReference type="PRINTS" id="PR00768">
    <property type="entry name" value="DEUTEROLYSIN"/>
</dbReference>
<dbReference type="SUPFAM" id="SSF55486">
    <property type="entry name" value="Metalloproteases ('zincins'), catalytic domain"/>
    <property type="match status" value="1"/>
</dbReference>
<comment type="function">
    <text evidence="1">Secreted metalloproteinase that allows assimilation of proteinaceous substrates. Shows high activities on basic nuclear substrates such as histone and protamine (By similarity).</text>
</comment>
<comment type="catalytic activity">
    <reaction>
        <text>Preferential cleavage of bonds with hydrophobic residues in P1'. Also 3-Asn-|-Gln-4 and 8-Gly-|-Ser-9 bonds in insulin B chain.</text>
        <dbReference type="EC" id="3.4.24.39"/>
    </reaction>
</comment>
<comment type="cofactor">
    <cofactor evidence="1">
        <name>Zn(2+)</name>
        <dbReference type="ChEBI" id="CHEBI:29105"/>
    </cofactor>
    <text evidence="1">Binds 1 zinc ion per subunit.</text>
</comment>
<comment type="subcellular location">
    <subcellularLocation>
        <location evidence="1">Secreted</location>
    </subcellularLocation>
</comment>
<comment type="similarity">
    <text evidence="3">Belongs to the peptidase M35 family.</text>
</comment>
<proteinExistence type="inferred from homology"/>
<feature type="signal peptide" evidence="2">
    <location>
        <begin position="1"/>
        <end position="18"/>
    </location>
</feature>
<feature type="propeptide" id="PRO_0000407112" evidence="1">
    <location>
        <begin position="19"/>
        <end position="180"/>
    </location>
</feature>
<feature type="chain" id="PRO_0000407113" description="Neutral protease 2 homolog SNOG_10522">
    <location>
        <begin position="181"/>
        <end position="350"/>
    </location>
</feature>
<feature type="active site" evidence="1">
    <location>
        <position position="302"/>
    </location>
</feature>
<feature type="binding site" evidence="1">
    <location>
        <position position="301"/>
    </location>
    <ligand>
        <name>Zn(2+)</name>
        <dbReference type="ChEBI" id="CHEBI:29105"/>
        <note>catalytic</note>
    </ligand>
</feature>
<feature type="binding site" evidence="1">
    <location>
        <position position="305"/>
    </location>
    <ligand>
        <name>Zn(2+)</name>
        <dbReference type="ChEBI" id="CHEBI:29105"/>
        <note>catalytic</note>
    </ligand>
</feature>
<feature type="binding site" evidence="1">
    <location>
        <position position="316"/>
    </location>
    <ligand>
        <name>Zn(2+)</name>
        <dbReference type="ChEBI" id="CHEBI:29105"/>
        <note>catalytic</note>
    </ligand>
</feature>
<feature type="disulfide bond" evidence="1">
    <location>
        <begin position="184"/>
        <end position="251"/>
    </location>
</feature>
<feature type="disulfide bond" evidence="1">
    <location>
        <begin position="258"/>
        <end position="276"/>
    </location>
</feature>
<keyword id="KW-0165">Cleavage on pair of basic residues</keyword>
<keyword id="KW-1015">Disulfide bond</keyword>
<keyword id="KW-0378">Hydrolase</keyword>
<keyword id="KW-0479">Metal-binding</keyword>
<keyword id="KW-0482">Metalloprotease</keyword>
<keyword id="KW-0645">Protease</keyword>
<keyword id="KW-0964">Secreted</keyword>
<keyword id="KW-0732">Signal</keyword>
<keyword id="KW-0862">Zinc</keyword>
<keyword id="KW-0865">Zymogen</keyword>
<name>NPIIA_PHANO</name>